<gene>
    <name evidence="7" type="primary">RR5</name>
    <name evidence="8" type="ORF">OsI_16696</name>
    <name evidence="6" type="ORF">OSIGBa0153E02-OSIGBa0093I20.12</name>
</gene>
<dbReference type="EMBL" id="AJ938074">
    <property type="protein sequence ID" value="CAI79409.1"/>
    <property type="molecule type" value="mRNA"/>
</dbReference>
<dbReference type="EMBL" id="CR855229">
    <property type="protein sequence ID" value="CAH67883.1"/>
    <property type="molecule type" value="Genomic_DNA"/>
</dbReference>
<dbReference type="EMBL" id="CM000129">
    <property type="protein sequence ID" value="EEC77666.1"/>
    <property type="molecule type" value="Genomic_DNA"/>
</dbReference>
<dbReference type="SMR" id="Q4GZK6"/>
<dbReference type="STRING" id="39946.Q4GZK6"/>
<dbReference type="EnsemblPlants" id="BGIOSGA016783-TA">
    <property type="protein sequence ID" value="BGIOSGA016783-PA"/>
    <property type="gene ID" value="BGIOSGA016783"/>
</dbReference>
<dbReference type="Gramene" id="BGIOSGA016783-TA">
    <property type="protein sequence ID" value="BGIOSGA016783-PA"/>
    <property type="gene ID" value="BGIOSGA016783"/>
</dbReference>
<dbReference type="HOGENOM" id="CLU_000445_69_5_1"/>
<dbReference type="OMA" id="NIETIMI"/>
<dbReference type="Proteomes" id="UP000007015">
    <property type="component" value="Chromosome 4"/>
</dbReference>
<dbReference type="GO" id="GO:0005829">
    <property type="term" value="C:cytosol"/>
    <property type="evidence" value="ECO:0007669"/>
    <property type="project" value="EnsemblPlants"/>
</dbReference>
<dbReference type="GO" id="GO:0005634">
    <property type="term" value="C:nucleus"/>
    <property type="evidence" value="ECO:0007669"/>
    <property type="project" value="EnsemblPlants"/>
</dbReference>
<dbReference type="GO" id="GO:0009736">
    <property type="term" value="P:cytokinin-activated signaling pathway"/>
    <property type="evidence" value="ECO:0007669"/>
    <property type="project" value="UniProtKB-KW"/>
</dbReference>
<dbReference type="GO" id="GO:0000160">
    <property type="term" value="P:phosphorelay signal transduction system"/>
    <property type="evidence" value="ECO:0007669"/>
    <property type="project" value="UniProtKB-KW"/>
</dbReference>
<dbReference type="CDD" id="cd17581">
    <property type="entry name" value="REC_typeA_ARR"/>
    <property type="match status" value="1"/>
</dbReference>
<dbReference type="FunFam" id="3.40.50.2300:FF:000159">
    <property type="entry name" value="Two-component response regulator ORR5"/>
    <property type="match status" value="1"/>
</dbReference>
<dbReference type="Gene3D" id="3.40.50.2300">
    <property type="match status" value="1"/>
</dbReference>
<dbReference type="InterPro" id="IPR045279">
    <property type="entry name" value="ARR-like"/>
</dbReference>
<dbReference type="InterPro" id="IPR011006">
    <property type="entry name" value="CheY-like_superfamily"/>
</dbReference>
<dbReference type="InterPro" id="IPR001789">
    <property type="entry name" value="Sig_transdc_resp-reg_receiver"/>
</dbReference>
<dbReference type="PANTHER" id="PTHR43874">
    <property type="entry name" value="TWO-COMPONENT RESPONSE REGULATOR"/>
    <property type="match status" value="1"/>
</dbReference>
<dbReference type="PANTHER" id="PTHR43874:SF72">
    <property type="entry name" value="TWO-COMPONENT RESPONSE REGULATOR ORR5"/>
    <property type="match status" value="1"/>
</dbReference>
<dbReference type="Pfam" id="PF00072">
    <property type="entry name" value="Response_reg"/>
    <property type="match status" value="1"/>
</dbReference>
<dbReference type="SMART" id="SM00448">
    <property type="entry name" value="REC"/>
    <property type="match status" value="1"/>
</dbReference>
<dbReference type="SUPFAM" id="SSF52172">
    <property type="entry name" value="CheY-like"/>
    <property type="match status" value="1"/>
</dbReference>
<dbReference type="PROSITE" id="PS50110">
    <property type="entry name" value="RESPONSE_REGULATORY"/>
    <property type="match status" value="1"/>
</dbReference>
<reference key="1">
    <citation type="journal article" date="2006" name="BMC Plant Biol.">
        <title>Molecular characterization and differential expression of cytokinin-responsive type-A response regulators in rice (Oryza sativa).</title>
        <authorList>
            <person name="Jain M."/>
            <person name="Tyagi A.K."/>
            <person name="Khurana J.P."/>
        </authorList>
    </citation>
    <scope>NUCLEOTIDE SEQUENCE [MRNA]</scope>
    <scope>TISSUE SPECIFICITY</scope>
    <scope>INDUCTION</scope>
    <source>
        <strain>cv. Pusa Basmati</strain>
    </source>
</reference>
<reference key="2">
    <citation type="journal article" date="2002" name="Nature">
        <title>Sequence and analysis of rice chromosome 4.</title>
        <authorList>
            <person name="Feng Q."/>
            <person name="Zhang Y."/>
            <person name="Hao P."/>
            <person name="Wang S."/>
            <person name="Fu G."/>
            <person name="Huang Y."/>
            <person name="Li Y."/>
            <person name="Zhu J."/>
            <person name="Liu Y."/>
            <person name="Hu X."/>
            <person name="Jia P."/>
            <person name="Zhang Y."/>
            <person name="Zhao Q."/>
            <person name="Ying K."/>
            <person name="Yu S."/>
            <person name="Tang Y."/>
            <person name="Weng Q."/>
            <person name="Zhang L."/>
            <person name="Lu Y."/>
            <person name="Mu J."/>
            <person name="Lu Y."/>
            <person name="Zhang L.S."/>
            <person name="Yu Z."/>
            <person name="Fan D."/>
            <person name="Liu X."/>
            <person name="Lu T."/>
            <person name="Li C."/>
            <person name="Wu Y."/>
            <person name="Sun T."/>
            <person name="Lei H."/>
            <person name="Li T."/>
            <person name="Hu H."/>
            <person name="Guan J."/>
            <person name="Wu M."/>
            <person name="Zhang R."/>
            <person name="Zhou B."/>
            <person name="Chen Z."/>
            <person name="Chen L."/>
            <person name="Jin Z."/>
            <person name="Wang R."/>
            <person name="Yin H."/>
            <person name="Cai Z."/>
            <person name="Ren S."/>
            <person name="Lv G."/>
            <person name="Gu W."/>
            <person name="Zhu G."/>
            <person name="Tu Y."/>
            <person name="Jia J."/>
            <person name="Zhang Y."/>
            <person name="Chen J."/>
            <person name="Kang H."/>
            <person name="Chen X."/>
            <person name="Shao C."/>
            <person name="Sun Y."/>
            <person name="Hu Q."/>
            <person name="Zhang X."/>
            <person name="Zhang W."/>
            <person name="Wang L."/>
            <person name="Ding C."/>
            <person name="Sheng H."/>
            <person name="Gu J."/>
            <person name="Chen S."/>
            <person name="Ni L."/>
            <person name="Zhu F."/>
            <person name="Chen W."/>
            <person name="Lan L."/>
            <person name="Lai Y."/>
            <person name="Cheng Z."/>
            <person name="Gu M."/>
            <person name="Jiang J."/>
            <person name="Li J."/>
            <person name="Hong G."/>
            <person name="Xue Y."/>
            <person name="Han B."/>
        </authorList>
    </citation>
    <scope>NUCLEOTIDE SEQUENCE [LARGE SCALE GENOMIC DNA]</scope>
    <source>
        <strain>cv. Guang-Lu-Ai No.4</strain>
    </source>
</reference>
<reference key="3">
    <citation type="journal article" date="2005" name="PLoS Biol.">
        <title>The genomes of Oryza sativa: a history of duplications.</title>
        <authorList>
            <person name="Yu J."/>
            <person name="Wang J."/>
            <person name="Lin W."/>
            <person name="Li S."/>
            <person name="Li H."/>
            <person name="Zhou J."/>
            <person name="Ni P."/>
            <person name="Dong W."/>
            <person name="Hu S."/>
            <person name="Zeng C."/>
            <person name="Zhang J."/>
            <person name="Zhang Y."/>
            <person name="Li R."/>
            <person name="Xu Z."/>
            <person name="Li S."/>
            <person name="Li X."/>
            <person name="Zheng H."/>
            <person name="Cong L."/>
            <person name="Lin L."/>
            <person name="Yin J."/>
            <person name="Geng J."/>
            <person name="Li G."/>
            <person name="Shi J."/>
            <person name="Liu J."/>
            <person name="Lv H."/>
            <person name="Li J."/>
            <person name="Wang J."/>
            <person name="Deng Y."/>
            <person name="Ran L."/>
            <person name="Shi X."/>
            <person name="Wang X."/>
            <person name="Wu Q."/>
            <person name="Li C."/>
            <person name="Ren X."/>
            <person name="Wang J."/>
            <person name="Wang X."/>
            <person name="Li D."/>
            <person name="Liu D."/>
            <person name="Zhang X."/>
            <person name="Ji Z."/>
            <person name="Zhao W."/>
            <person name="Sun Y."/>
            <person name="Zhang Z."/>
            <person name="Bao J."/>
            <person name="Han Y."/>
            <person name="Dong L."/>
            <person name="Ji J."/>
            <person name="Chen P."/>
            <person name="Wu S."/>
            <person name="Liu J."/>
            <person name="Xiao Y."/>
            <person name="Bu D."/>
            <person name="Tan J."/>
            <person name="Yang L."/>
            <person name="Ye C."/>
            <person name="Zhang J."/>
            <person name="Xu J."/>
            <person name="Zhou Y."/>
            <person name="Yu Y."/>
            <person name="Zhang B."/>
            <person name="Zhuang S."/>
            <person name="Wei H."/>
            <person name="Liu B."/>
            <person name="Lei M."/>
            <person name="Yu H."/>
            <person name="Li Y."/>
            <person name="Xu H."/>
            <person name="Wei S."/>
            <person name="He X."/>
            <person name="Fang L."/>
            <person name="Zhang Z."/>
            <person name="Zhang Y."/>
            <person name="Huang X."/>
            <person name="Su Z."/>
            <person name="Tong W."/>
            <person name="Li J."/>
            <person name="Tong Z."/>
            <person name="Li S."/>
            <person name="Ye J."/>
            <person name="Wang L."/>
            <person name="Fang L."/>
            <person name="Lei T."/>
            <person name="Chen C.-S."/>
            <person name="Chen H.-C."/>
            <person name="Xu Z."/>
            <person name="Li H."/>
            <person name="Huang H."/>
            <person name="Zhang F."/>
            <person name="Xu H."/>
            <person name="Li N."/>
            <person name="Zhao C."/>
            <person name="Li S."/>
            <person name="Dong L."/>
            <person name="Huang Y."/>
            <person name="Li L."/>
            <person name="Xi Y."/>
            <person name="Qi Q."/>
            <person name="Li W."/>
            <person name="Zhang B."/>
            <person name="Hu W."/>
            <person name="Zhang Y."/>
            <person name="Tian X."/>
            <person name="Jiao Y."/>
            <person name="Liang X."/>
            <person name="Jin J."/>
            <person name="Gao L."/>
            <person name="Zheng W."/>
            <person name="Hao B."/>
            <person name="Liu S.-M."/>
            <person name="Wang W."/>
            <person name="Yuan L."/>
            <person name="Cao M."/>
            <person name="McDermott J."/>
            <person name="Samudrala R."/>
            <person name="Wang J."/>
            <person name="Wong G.K.-S."/>
            <person name="Yang H."/>
        </authorList>
    </citation>
    <scope>NUCLEOTIDE SEQUENCE [LARGE SCALE GENOMIC DNA]</scope>
    <source>
        <strain>cv. 93-11</strain>
    </source>
</reference>
<comment type="function">
    <text evidence="1">Functions as a response regulator involved in His-to-Asp phosphorelay signal transduction system. Phosphorylation of the Asp residue in the receiver domain activates the ability of the protein to promote the transcription of target genes. Type-A response regulators seem to act as negative regulators of the cytokinin signaling.</text>
</comment>
<comment type="tissue specificity">
    <text evidence="3">Expressed in mature leaves and shoots, and at low levels in roots and flowers.</text>
</comment>
<comment type="induction">
    <text evidence="3">By cytokinin.</text>
</comment>
<comment type="PTM">
    <text evidence="5">Two-component system major event consists of a His-to-Asp phosphorelay between a sensor histidine kinase (HK) and a response regulator (RR). In plants, the His-to-Asp phosphorelay involves an additional intermediate named Histidine-containing phosphotransfer protein (HPt). This multistep phosphorelay consists of a His-Asp-His-Asp sequential transfer of a phosphate group between first a His and an Asp of the HK protein, followed by the transfer to a conserved His of the HPt protein and finally the transfer to an Asp in the receiver domain of the RR protein.</text>
</comment>
<comment type="similarity">
    <text evidence="5">Belongs to the ARR family. Type-A subfamily.</text>
</comment>
<name>ORR5_ORYSI</name>
<feature type="chain" id="PRO_0000433825" description="Two-component response regulator ORR5">
    <location>
        <begin position="1"/>
        <end position="134"/>
    </location>
</feature>
<feature type="domain" description="Response regulatory" evidence="2">
    <location>
        <begin position="16"/>
        <end position="133"/>
    </location>
</feature>
<feature type="modified residue" description="4-aspartylphosphate" evidence="2">
    <location>
        <position position="66"/>
    </location>
</feature>
<protein>
    <recommendedName>
        <fullName evidence="5">Two-component response regulator ORR5</fullName>
    </recommendedName>
    <alternativeName>
        <fullName evidence="4">Type A response regulator 5</fullName>
        <shortName evidence="4">OsRR5</shortName>
    </alternativeName>
</protein>
<proteinExistence type="evidence at transcript level"/>
<evidence type="ECO:0000250" key="1">
    <source>
        <dbReference type="UniProtKB" id="Q9ZWS9"/>
    </source>
</evidence>
<evidence type="ECO:0000255" key="2">
    <source>
        <dbReference type="PROSITE-ProRule" id="PRU00169"/>
    </source>
</evidence>
<evidence type="ECO:0000269" key="3">
    <source>
    </source>
</evidence>
<evidence type="ECO:0000303" key="4">
    <source>
    </source>
</evidence>
<evidence type="ECO:0000305" key="5"/>
<evidence type="ECO:0000312" key="6">
    <source>
        <dbReference type="EMBL" id="CAH67883.1"/>
    </source>
</evidence>
<evidence type="ECO:0000312" key="7">
    <source>
        <dbReference type="EMBL" id="CAI79409.1"/>
    </source>
</evidence>
<evidence type="ECO:0000312" key="8">
    <source>
        <dbReference type="EMBL" id="EEC77666.1"/>
    </source>
</evidence>
<keyword id="KW-0932">Cytokinin signaling pathway</keyword>
<keyword id="KW-0597">Phosphoprotein</keyword>
<keyword id="KW-1185">Reference proteome</keyword>
<keyword id="KW-0804">Transcription</keyword>
<keyword id="KW-0805">Transcription regulation</keyword>
<keyword id="KW-0902">Two-component regulatory system</keyword>
<accession>Q4GZK6</accession>
<accession>Q01HR3</accession>
<organism>
    <name type="scientific">Oryza sativa subsp. indica</name>
    <name type="common">Rice</name>
    <dbReference type="NCBI Taxonomy" id="39946"/>
    <lineage>
        <taxon>Eukaryota</taxon>
        <taxon>Viridiplantae</taxon>
        <taxon>Streptophyta</taxon>
        <taxon>Embryophyta</taxon>
        <taxon>Tracheophyta</taxon>
        <taxon>Spermatophyta</taxon>
        <taxon>Magnoliopsida</taxon>
        <taxon>Liliopsida</taxon>
        <taxon>Poales</taxon>
        <taxon>Poaceae</taxon>
        <taxon>BOP clade</taxon>
        <taxon>Oryzoideae</taxon>
        <taxon>Oryzeae</taxon>
        <taxon>Oryzinae</taxon>
        <taxon>Oryza</taxon>
        <taxon>Oryza sativa</taxon>
    </lineage>
</organism>
<sequence>MATCRSRGVERGGAPHVLAVDDSSVDRAVISGILRSSQFRVTAVDSGKRALELLGSEPNVSMIITDYWMPEMTGYELLKKVKESSRLKEIPVVIMSSENVSTRINRCLEEGAEDFLLKPVQPSDVSRLCSRVLR</sequence>